<protein>
    <recommendedName>
        <fullName evidence="1">2-C-methyl-D-erythritol 4-phosphate cytidylyltransferase</fullName>
        <ecNumber evidence="1">2.7.7.60</ecNumber>
    </recommendedName>
    <alternativeName>
        <fullName evidence="1">4-diphosphocytidyl-2C-methyl-D-erythritol synthase</fullName>
    </alternativeName>
    <alternativeName>
        <fullName evidence="1">MEP cytidylyltransferase</fullName>
        <shortName evidence="1">MCT</shortName>
    </alternativeName>
</protein>
<sequence>MIVGVILFGGKGTRFSKDFPKQFLKFNGKALMEHTVEKFLLDCFEFLVVVSNKDYINKSIEILKKFEKKIYVIEGGKTREHSTFNAIKFLENKIDLEDIVLIHDGARPFVNKDIIEKNIENAKLFGATVTAISSENTIAVVENDFILSVPKRDSIFIIQTPQTFKYKVLKDSFFKFSNRLDNFTDDSSVVLASGYKVSITEGNKKNIKITTVEDLHLMGVDEIVGG</sequence>
<proteinExistence type="inferred from homology"/>
<dbReference type="EC" id="2.7.7.60" evidence="1"/>
<dbReference type="EMBL" id="CP001185">
    <property type="protein sequence ID" value="ACJ74725.1"/>
    <property type="molecule type" value="Genomic_DNA"/>
</dbReference>
<dbReference type="RefSeq" id="WP_012579424.1">
    <property type="nucleotide sequence ID" value="NC_011653.1"/>
</dbReference>
<dbReference type="SMR" id="B7IF61"/>
<dbReference type="STRING" id="484019.THA_220"/>
<dbReference type="KEGG" id="taf:THA_220"/>
<dbReference type="eggNOG" id="COG1211">
    <property type="taxonomic scope" value="Bacteria"/>
</dbReference>
<dbReference type="HOGENOM" id="CLU_061281_2_3_0"/>
<dbReference type="OrthoDB" id="9806837at2"/>
<dbReference type="UniPathway" id="UPA00056">
    <property type="reaction ID" value="UER00093"/>
</dbReference>
<dbReference type="Proteomes" id="UP000002453">
    <property type="component" value="Chromosome"/>
</dbReference>
<dbReference type="GO" id="GO:0050518">
    <property type="term" value="F:2-C-methyl-D-erythritol 4-phosphate cytidylyltransferase activity"/>
    <property type="evidence" value="ECO:0007669"/>
    <property type="project" value="UniProtKB-UniRule"/>
</dbReference>
<dbReference type="GO" id="GO:0019288">
    <property type="term" value="P:isopentenyl diphosphate biosynthetic process, methylerythritol 4-phosphate pathway"/>
    <property type="evidence" value="ECO:0007669"/>
    <property type="project" value="UniProtKB-UniRule"/>
</dbReference>
<dbReference type="CDD" id="cd02516">
    <property type="entry name" value="CDP-ME_synthetase"/>
    <property type="match status" value="1"/>
</dbReference>
<dbReference type="FunFam" id="3.90.550.10:FF:000003">
    <property type="entry name" value="2-C-methyl-D-erythritol 4-phosphate cytidylyltransferase"/>
    <property type="match status" value="1"/>
</dbReference>
<dbReference type="Gene3D" id="3.90.550.10">
    <property type="entry name" value="Spore Coat Polysaccharide Biosynthesis Protein SpsA, Chain A"/>
    <property type="match status" value="1"/>
</dbReference>
<dbReference type="HAMAP" id="MF_00108">
    <property type="entry name" value="IspD"/>
    <property type="match status" value="1"/>
</dbReference>
<dbReference type="InterPro" id="IPR001228">
    <property type="entry name" value="IspD"/>
</dbReference>
<dbReference type="InterPro" id="IPR034683">
    <property type="entry name" value="IspD/TarI"/>
</dbReference>
<dbReference type="InterPro" id="IPR050088">
    <property type="entry name" value="IspD/TarI_cytidylyltransf_bact"/>
</dbReference>
<dbReference type="InterPro" id="IPR018294">
    <property type="entry name" value="ISPD_synthase_CS"/>
</dbReference>
<dbReference type="InterPro" id="IPR029044">
    <property type="entry name" value="Nucleotide-diphossugar_trans"/>
</dbReference>
<dbReference type="NCBIfam" id="NF001183">
    <property type="entry name" value="PRK00155.1-3"/>
    <property type="match status" value="1"/>
</dbReference>
<dbReference type="PANTHER" id="PTHR32125">
    <property type="entry name" value="2-C-METHYL-D-ERYTHRITOL 4-PHOSPHATE CYTIDYLYLTRANSFERASE, CHLOROPLASTIC"/>
    <property type="match status" value="1"/>
</dbReference>
<dbReference type="PANTHER" id="PTHR32125:SF8">
    <property type="entry name" value="RIBITOL-5-PHOSPHATE CYTIDYLYLTRANSFERASE"/>
    <property type="match status" value="1"/>
</dbReference>
<dbReference type="Pfam" id="PF01128">
    <property type="entry name" value="IspD"/>
    <property type="match status" value="1"/>
</dbReference>
<dbReference type="SUPFAM" id="SSF53448">
    <property type="entry name" value="Nucleotide-diphospho-sugar transferases"/>
    <property type="match status" value="1"/>
</dbReference>
<dbReference type="PROSITE" id="PS01295">
    <property type="entry name" value="ISPD"/>
    <property type="match status" value="1"/>
</dbReference>
<comment type="function">
    <text evidence="1">Catalyzes the formation of 4-diphosphocytidyl-2-C-methyl-D-erythritol from CTP and 2-C-methyl-D-erythritol 4-phosphate (MEP).</text>
</comment>
<comment type="catalytic activity">
    <reaction evidence="1">
        <text>2-C-methyl-D-erythritol 4-phosphate + CTP + H(+) = 4-CDP-2-C-methyl-D-erythritol + diphosphate</text>
        <dbReference type="Rhea" id="RHEA:13429"/>
        <dbReference type="ChEBI" id="CHEBI:15378"/>
        <dbReference type="ChEBI" id="CHEBI:33019"/>
        <dbReference type="ChEBI" id="CHEBI:37563"/>
        <dbReference type="ChEBI" id="CHEBI:57823"/>
        <dbReference type="ChEBI" id="CHEBI:58262"/>
        <dbReference type="EC" id="2.7.7.60"/>
    </reaction>
</comment>
<comment type="pathway">
    <text evidence="1">Isoprenoid biosynthesis; isopentenyl diphosphate biosynthesis via DXP pathway; isopentenyl diphosphate from 1-deoxy-D-xylulose 5-phosphate: step 2/6.</text>
</comment>
<comment type="similarity">
    <text evidence="1">Belongs to the IspD/TarI cytidylyltransferase family. IspD subfamily.</text>
</comment>
<accession>B7IF61</accession>
<organism>
    <name type="scientific">Thermosipho africanus (strain TCF52B)</name>
    <dbReference type="NCBI Taxonomy" id="484019"/>
    <lineage>
        <taxon>Bacteria</taxon>
        <taxon>Thermotogati</taxon>
        <taxon>Thermotogota</taxon>
        <taxon>Thermotogae</taxon>
        <taxon>Thermotogales</taxon>
        <taxon>Fervidobacteriaceae</taxon>
        <taxon>Thermosipho</taxon>
    </lineage>
</organism>
<name>ISPD_THEAB</name>
<evidence type="ECO:0000255" key="1">
    <source>
        <dbReference type="HAMAP-Rule" id="MF_00108"/>
    </source>
</evidence>
<keyword id="KW-0414">Isoprene biosynthesis</keyword>
<keyword id="KW-0548">Nucleotidyltransferase</keyword>
<keyword id="KW-1185">Reference proteome</keyword>
<keyword id="KW-0808">Transferase</keyword>
<gene>
    <name evidence="1" type="primary">ispD</name>
    <name type="ordered locus">THA_220</name>
</gene>
<feature type="chain" id="PRO_1000191075" description="2-C-methyl-D-erythritol 4-phosphate cytidylyltransferase">
    <location>
        <begin position="1"/>
        <end position="226"/>
    </location>
</feature>
<feature type="site" description="Transition state stabilizer" evidence="1">
    <location>
        <position position="14"/>
    </location>
</feature>
<feature type="site" description="Transition state stabilizer" evidence="1">
    <location>
        <position position="21"/>
    </location>
</feature>
<feature type="site" description="Positions MEP for the nucleophilic attack" evidence="1">
    <location>
        <position position="152"/>
    </location>
</feature>
<feature type="site" description="Positions MEP for the nucleophilic attack" evidence="1">
    <location>
        <position position="208"/>
    </location>
</feature>
<reference key="1">
    <citation type="journal article" date="2009" name="J. Bacteriol.">
        <title>The genome of Thermosipho africanus TCF52B: lateral genetic connections to the Firmicutes and Archaea.</title>
        <authorList>
            <person name="Nesboe C.L."/>
            <person name="Bapteste E."/>
            <person name="Curtis B."/>
            <person name="Dahle H."/>
            <person name="Lopez P."/>
            <person name="Macleod D."/>
            <person name="Dlutek M."/>
            <person name="Bowman S."/>
            <person name="Zhaxybayeva O."/>
            <person name="Birkeland N.-K."/>
            <person name="Doolittle W.F."/>
        </authorList>
    </citation>
    <scope>NUCLEOTIDE SEQUENCE [LARGE SCALE GENOMIC DNA]</scope>
    <source>
        <strain>TCF52B</strain>
    </source>
</reference>